<gene>
    <name evidence="1" type="primary">trmA</name>
    <name type="ordered locus">ESA_03801</name>
</gene>
<name>TRMA_CROS8</name>
<comment type="function">
    <text evidence="1">Dual-specificity methyltransferase that catalyzes the formation of 5-methyluridine at position 54 (m5U54) in all tRNAs, and that of position 341 (m5U341) in tmRNA (transfer-mRNA).</text>
</comment>
<comment type="catalytic activity">
    <reaction evidence="1">
        <text>uridine(54) in tRNA + S-adenosyl-L-methionine = 5-methyluridine(54) in tRNA + S-adenosyl-L-homocysteine + H(+)</text>
        <dbReference type="Rhea" id="RHEA:42712"/>
        <dbReference type="Rhea" id="RHEA-COMP:10167"/>
        <dbReference type="Rhea" id="RHEA-COMP:10193"/>
        <dbReference type="ChEBI" id="CHEBI:15378"/>
        <dbReference type="ChEBI" id="CHEBI:57856"/>
        <dbReference type="ChEBI" id="CHEBI:59789"/>
        <dbReference type="ChEBI" id="CHEBI:65315"/>
        <dbReference type="ChEBI" id="CHEBI:74447"/>
        <dbReference type="EC" id="2.1.1.35"/>
    </reaction>
</comment>
<comment type="catalytic activity">
    <reaction evidence="1">
        <text>uridine(341) in tmRNA + S-adenosyl-L-methionine = 5-methyluridine(341) in tmRNA + S-adenosyl-L-homocysteine + H(+)</text>
        <dbReference type="Rhea" id="RHEA:43612"/>
        <dbReference type="Rhea" id="RHEA-COMP:10630"/>
        <dbReference type="Rhea" id="RHEA-COMP:10631"/>
        <dbReference type="ChEBI" id="CHEBI:15378"/>
        <dbReference type="ChEBI" id="CHEBI:57856"/>
        <dbReference type="ChEBI" id="CHEBI:59789"/>
        <dbReference type="ChEBI" id="CHEBI:65315"/>
        <dbReference type="ChEBI" id="CHEBI:74447"/>
    </reaction>
</comment>
<comment type="similarity">
    <text evidence="1">Belongs to the class I-like SAM-binding methyltransferase superfamily. RNA M5U methyltransferase family. TrmA subfamily.</text>
</comment>
<comment type="sequence caution" evidence="2">
    <conflict type="erroneous initiation">
        <sequence resource="EMBL-CDS" id="ABU78987"/>
    </conflict>
    <text>Extended N-terminus.</text>
</comment>
<keyword id="KW-0489">Methyltransferase</keyword>
<keyword id="KW-1185">Reference proteome</keyword>
<keyword id="KW-0949">S-adenosyl-L-methionine</keyword>
<keyword id="KW-0808">Transferase</keyword>
<keyword id="KW-0819">tRNA processing</keyword>
<dbReference type="EC" id="2.1.1.-" evidence="1"/>
<dbReference type="EC" id="2.1.1.35" evidence="1"/>
<dbReference type="EMBL" id="CP000783">
    <property type="protein sequence ID" value="ABU78987.1"/>
    <property type="status" value="ALT_INIT"/>
    <property type="molecule type" value="Genomic_DNA"/>
</dbReference>
<dbReference type="RefSeq" id="WP_041460630.1">
    <property type="nucleotide sequence ID" value="NC_009778.1"/>
</dbReference>
<dbReference type="SMR" id="A7ML95"/>
<dbReference type="KEGG" id="esa:ESA_03801"/>
<dbReference type="PATRIC" id="fig|290339.8.peg.3375"/>
<dbReference type="HOGENOM" id="CLU_043022_0_0_6"/>
<dbReference type="Proteomes" id="UP000000260">
    <property type="component" value="Chromosome"/>
</dbReference>
<dbReference type="GO" id="GO:0005829">
    <property type="term" value="C:cytosol"/>
    <property type="evidence" value="ECO:0007669"/>
    <property type="project" value="TreeGrafter"/>
</dbReference>
<dbReference type="GO" id="GO:0019843">
    <property type="term" value="F:rRNA binding"/>
    <property type="evidence" value="ECO:0007669"/>
    <property type="project" value="TreeGrafter"/>
</dbReference>
<dbReference type="GO" id="GO:0030697">
    <property type="term" value="F:tRNA (uracil(54)-C5)-methyltransferase activity, S-adenosyl methionine-dependent"/>
    <property type="evidence" value="ECO:0007669"/>
    <property type="project" value="UniProtKB-UniRule"/>
</dbReference>
<dbReference type="GO" id="GO:0000049">
    <property type="term" value="F:tRNA binding"/>
    <property type="evidence" value="ECO:0007669"/>
    <property type="project" value="TreeGrafter"/>
</dbReference>
<dbReference type="GO" id="GO:0030488">
    <property type="term" value="P:tRNA methylation"/>
    <property type="evidence" value="ECO:0007669"/>
    <property type="project" value="UniProtKB-UniRule"/>
</dbReference>
<dbReference type="CDD" id="cd02440">
    <property type="entry name" value="AdoMet_MTases"/>
    <property type="match status" value="1"/>
</dbReference>
<dbReference type="FunFam" id="2.40.50.1070:FF:000001">
    <property type="entry name" value="tRNA/tmRNA (uracil-C(5))-methyltransferase"/>
    <property type="match status" value="1"/>
</dbReference>
<dbReference type="FunFam" id="3.40.50.150:FF:000012">
    <property type="entry name" value="tRNA/tmRNA (uracil-C(5))-methyltransferase"/>
    <property type="match status" value="1"/>
</dbReference>
<dbReference type="Gene3D" id="2.40.50.1070">
    <property type="match status" value="1"/>
</dbReference>
<dbReference type="Gene3D" id="3.40.50.150">
    <property type="entry name" value="Vaccinia Virus protein VP39"/>
    <property type="match status" value="1"/>
</dbReference>
<dbReference type="HAMAP" id="MF_01011">
    <property type="entry name" value="RNA_methyltr_TrmA"/>
    <property type="match status" value="1"/>
</dbReference>
<dbReference type="InterPro" id="IPR030390">
    <property type="entry name" value="MeTrfase_TrmA_AS"/>
</dbReference>
<dbReference type="InterPro" id="IPR030391">
    <property type="entry name" value="MeTrfase_TrmA_CS"/>
</dbReference>
<dbReference type="InterPro" id="IPR029063">
    <property type="entry name" value="SAM-dependent_MTases_sf"/>
</dbReference>
<dbReference type="InterPro" id="IPR011869">
    <property type="entry name" value="TrmA_MeTrfase"/>
</dbReference>
<dbReference type="InterPro" id="IPR010280">
    <property type="entry name" value="U5_MeTrfase_fam"/>
</dbReference>
<dbReference type="NCBIfam" id="TIGR02143">
    <property type="entry name" value="trmA_only"/>
    <property type="match status" value="1"/>
</dbReference>
<dbReference type="PANTHER" id="PTHR47790">
    <property type="entry name" value="TRNA/TMRNA (URACIL-C(5))-METHYLTRANSFERASE"/>
    <property type="match status" value="1"/>
</dbReference>
<dbReference type="PANTHER" id="PTHR47790:SF2">
    <property type="entry name" value="TRNA_TMRNA (URACIL-C(5))-METHYLTRANSFERASE"/>
    <property type="match status" value="1"/>
</dbReference>
<dbReference type="Pfam" id="PF05958">
    <property type="entry name" value="tRNA_U5-meth_tr"/>
    <property type="match status" value="1"/>
</dbReference>
<dbReference type="SUPFAM" id="SSF53335">
    <property type="entry name" value="S-adenosyl-L-methionine-dependent methyltransferases"/>
    <property type="match status" value="1"/>
</dbReference>
<dbReference type="PROSITE" id="PS51687">
    <property type="entry name" value="SAM_MT_RNA_M5U"/>
    <property type="match status" value="1"/>
</dbReference>
<dbReference type="PROSITE" id="PS01230">
    <property type="entry name" value="TRMA_1"/>
    <property type="match status" value="1"/>
</dbReference>
<dbReference type="PROSITE" id="PS01231">
    <property type="entry name" value="TRMA_2"/>
    <property type="match status" value="1"/>
</dbReference>
<reference key="1">
    <citation type="journal article" date="2010" name="PLoS ONE">
        <title>Genome sequence of Cronobacter sakazakii BAA-894 and comparative genomic hybridization analysis with other Cronobacter species.</title>
        <authorList>
            <person name="Kucerova E."/>
            <person name="Clifton S.W."/>
            <person name="Xia X.Q."/>
            <person name="Long F."/>
            <person name="Porwollik S."/>
            <person name="Fulton L."/>
            <person name="Fronick C."/>
            <person name="Minx P."/>
            <person name="Kyung K."/>
            <person name="Warren W."/>
            <person name="Fulton R."/>
            <person name="Feng D."/>
            <person name="Wollam A."/>
            <person name="Shah N."/>
            <person name="Bhonagiri V."/>
            <person name="Nash W.E."/>
            <person name="Hallsworth-Pepin K."/>
            <person name="Wilson R.K."/>
            <person name="McClelland M."/>
            <person name="Forsythe S.J."/>
        </authorList>
    </citation>
    <scope>NUCLEOTIDE SEQUENCE [LARGE SCALE GENOMIC DNA]</scope>
    <source>
        <strain>ATCC BAA-894</strain>
    </source>
</reference>
<organism>
    <name type="scientific">Cronobacter sakazakii (strain ATCC BAA-894)</name>
    <name type="common">Enterobacter sakazakii</name>
    <dbReference type="NCBI Taxonomy" id="290339"/>
    <lineage>
        <taxon>Bacteria</taxon>
        <taxon>Pseudomonadati</taxon>
        <taxon>Pseudomonadota</taxon>
        <taxon>Gammaproteobacteria</taxon>
        <taxon>Enterobacterales</taxon>
        <taxon>Enterobacteriaceae</taxon>
        <taxon>Cronobacter</taxon>
    </lineage>
</organism>
<evidence type="ECO:0000255" key="1">
    <source>
        <dbReference type="HAMAP-Rule" id="MF_01011"/>
    </source>
</evidence>
<evidence type="ECO:0000305" key="2"/>
<feature type="chain" id="PRO_0000319446" description="tRNA/tmRNA (uracil-C(5))-methyltransferase">
    <location>
        <begin position="1"/>
        <end position="366"/>
    </location>
</feature>
<feature type="active site" description="Nucleophile" evidence="1">
    <location>
        <position position="324"/>
    </location>
</feature>
<feature type="active site" description="Proton acceptor" evidence="1">
    <location>
        <position position="358"/>
    </location>
</feature>
<feature type="binding site" evidence="1">
    <location>
        <position position="190"/>
    </location>
    <ligand>
        <name>S-adenosyl-L-methionine</name>
        <dbReference type="ChEBI" id="CHEBI:59789"/>
    </ligand>
</feature>
<feature type="binding site" evidence="1">
    <location>
        <position position="218"/>
    </location>
    <ligand>
        <name>S-adenosyl-L-methionine</name>
        <dbReference type="ChEBI" id="CHEBI:59789"/>
    </ligand>
</feature>
<feature type="binding site" evidence="1">
    <location>
        <position position="223"/>
    </location>
    <ligand>
        <name>S-adenosyl-L-methionine</name>
        <dbReference type="ChEBI" id="CHEBI:59789"/>
    </ligand>
</feature>
<feature type="binding site" evidence="1">
    <location>
        <position position="239"/>
    </location>
    <ligand>
        <name>S-adenosyl-L-methionine</name>
        <dbReference type="ChEBI" id="CHEBI:59789"/>
    </ligand>
</feature>
<feature type="binding site" evidence="1">
    <location>
        <position position="299"/>
    </location>
    <ligand>
        <name>S-adenosyl-L-methionine</name>
        <dbReference type="ChEBI" id="CHEBI:59789"/>
    </ligand>
</feature>
<sequence>MTPEHLPIDQYDAQLAEKTERLQSMMAPFAAPAPEVFRSPVSHYRMRAEFRLWHDGDDLYHIIFDQETRSRIRVDSFPAASELINALMPRMIAGIRDNRTLRHKLFQIDYLTTRSQQAVVSLLYHRALDDAWREEATRLRDALRADGFDVHFIGRATKTKIMLDQDYIDERLPVAGTEMIYRQVENSFTQPNAAMNIHMLEWALDVTQGSKGDLLELYCGNGNFSLALARNFNRVLATEIAKPSVAAAQYNIAANHIDNVQIIRMAAEEFTQAMNGVREFNRLQGIDLKSYQCETIFVDPPRSGLDQETVKMVQAYPHILYISCNPQTLCENLDTLSQTHRVERLALFDQFPYTHHMECGVLLTRR</sequence>
<accession>A7ML95</accession>
<protein>
    <recommendedName>
        <fullName evidence="1">tRNA/tmRNA (uracil-C(5))-methyltransferase</fullName>
        <ecNumber evidence="1">2.1.1.-</ecNumber>
        <ecNumber evidence="1">2.1.1.35</ecNumber>
    </recommendedName>
    <alternativeName>
        <fullName evidence="1">tRNA (uracil(54)-C(5))-methyltransferase</fullName>
    </alternativeName>
    <alternativeName>
        <fullName evidence="1">tRNA(m5U54)-methyltransferase</fullName>
        <shortName evidence="1">RUMT</shortName>
    </alternativeName>
    <alternativeName>
        <fullName evidence="1">tmRNA (uracil(341)-C(5))-methyltransferase</fullName>
    </alternativeName>
</protein>
<proteinExistence type="inferred from homology"/>